<accession>P36867</accession>
<feature type="chain" id="PRO_0000133079" description="Uncharacterized 9.2 kDa protein in PE 5'region">
    <location>
        <begin position="1"/>
        <end position="80"/>
    </location>
</feature>
<organismHost>
    <name type="scientific">Lepidoptera</name>
    <name type="common">butterflies and moths</name>
    <dbReference type="NCBI Taxonomy" id="7088"/>
</organismHost>
<proteinExistence type="predicted"/>
<sequence>MILQKYNSRIMTESALKADFTDYLLNVKAIVEFVKKYFKEDPTGEDYKRFTDSVLKLLGDLIDDYVDGKLFAADGEFLAD</sequence>
<protein>
    <recommendedName>
        <fullName>Uncharacterized 9.2 kDa protein in PE 5'region</fullName>
    </recommendedName>
    <alternativeName>
        <fullName>ORF2</fullName>
    </alternativeName>
</protein>
<dbReference type="EMBL" id="D37947">
    <property type="protein sequence ID" value="BAA07163.1"/>
    <property type="molecule type" value="Genomic_DNA"/>
</dbReference>
<dbReference type="PIR" id="JQ1558">
    <property type="entry name" value="JQ1558"/>
</dbReference>
<dbReference type="SMR" id="P36867"/>
<name>YPE2_NPVLD</name>
<reference key="1">
    <citation type="journal article" date="1992" name="J. Gen. Virol.">
        <title>Nucleotide sequence of the polyhedron envelope protein gene region of the Lymantria dispar nuclear polyhedrosis virus.</title>
        <authorList>
            <person name="Bjoernson R.M."/>
            <person name="Rohrmann G.F."/>
        </authorList>
    </citation>
    <scope>NUCLEOTIDE SEQUENCE [GENOMIC DNA]</scope>
</reference>
<organism>
    <name type="scientific">Lymantria dispar multicapsid nuclear polyhedrosis virus</name>
    <name type="common">LdMNPV</name>
    <dbReference type="NCBI Taxonomy" id="10449"/>
    <lineage>
        <taxon>Viruses</taxon>
        <taxon>Viruses incertae sedis</taxon>
        <taxon>Naldaviricetes</taxon>
        <taxon>Lefavirales</taxon>
        <taxon>Baculoviridae</taxon>
        <taxon>Alphabaculovirus</taxon>
        <taxon>Alphabaculovirus lydisparis</taxon>
    </lineage>
</organism>